<protein>
    <recommendedName>
        <fullName>Pre-mRNA-splicing factor CWC21</fullName>
    </recommendedName>
</protein>
<reference key="1">
    <citation type="journal article" date="2004" name="Proc. Natl. Acad. Sci. U.S.A.">
        <title>The diploid genome sequence of Candida albicans.</title>
        <authorList>
            <person name="Jones T."/>
            <person name="Federspiel N.A."/>
            <person name="Chibana H."/>
            <person name="Dungan J."/>
            <person name="Kalman S."/>
            <person name="Magee B.B."/>
            <person name="Newport G."/>
            <person name="Thorstenson Y.R."/>
            <person name="Agabian N."/>
            <person name="Magee P.T."/>
            <person name="Davis R.W."/>
            <person name="Scherer S."/>
        </authorList>
    </citation>
    <scope>NUCLEOTIDE SEQUENCE [LARGE SCALE GENOMIC DNA]</scope>
    <source>
        <strain>SC5314 / ATCC MYA-2876</strain>
    </source>
</reference>
<reference key="2">
    <citation type="journal article" date="2007" name="Genome Biol.">
        <title>Assembly of the Candida albicans genome into sixteen supercontigs aligned on the eight chromosomes.</title>
        <authorList>
            <person name="van het Hoog M."/>
            <person name="Rast T.J."/>
            <person name="Martchenko M."/>
            <person name="Grindle S."/>
            <person name="Dignard D."/>
            <person name="Hogues H."/>
            <person name="Cuomo C."/>
            <person name="Berriman M."/>
            <person name="Scherer S."/>
            <person name="Magee B.B."/>
            <person name="Whiteway M."/>
            <person name="Chibana H."/>
            <person name="Nantel A."/>
            <person name="Magee P.T."/>
        </authorList>
    </citation>
    <scope>GENOME REANNOTATION</scope>
    <source>
        <strain>SC5314 / ATCC MYA-2876</strain>
    </source>
</reference>
<reference key="3">
    <citation type="journal article" date="2013" name="Genome Biol.">
        <title>Assembly of a phased diploid Candida albicans genome facilitates allele-specific measurements and provides a simple model for repeat and indel structure.</title>
        <authorList>
            <person name="Muzzey D."/>
            <person name="Schwartz K."/>
            <person name="Weissman J.S."/>
            <person name="Sherlock G."/>
        </authorList>
    </citation>
    <scope>NUCLEOTIDE SEQUENCE [LARGE SCALE GENOMIC DNA]</scope>
    <scope>GENOME REANNOTATION</scope>
    <source>
        <strain>SC5314 / ATCC MYA-2876</strain>
    </source>
</reference>
<name>CWC21_CANAL</name>
<gene>
    <name type="primary">CWC21</name>
    <name type="ordered locus">CAALFM_C110080WA</name>
    <name type="ORF">CaO19.12339</name>
    <name type="ORF">CaO19.4875</name>
</gene>
<organism>
    <name type="scientific">Candida albicans (strain SC5314 / ATCC MYA-2876)</name>
    <name type="common">Yeast</name>
    <dbReference type="NCBI Taxonomy" id="237561"/>
    <lineage>
        <taxon>Eukaryota</taxon>
        <taxon>Fungi</taxon>
        <taxon>Dikarya</taxon>
        <taxon>Ascomycota</taxon>
        <taxon>Saccharomycotina</taxon>
        <taxon>Pichiomycetes</taxon>
        <taxon>Debaryomycetaceae</taxon>
        <taxon>Candida/Lodderomyces clade</taxon>
        <taxon>Candida</taxon>
    </lineage>
</organism>
<evidence type="ECO:0000250" key="1"/>
<evidence type="ECO:0000255" key="2"/>
<evidence type="ECO:0000256" key="3">
    <source>
        <dbReference type="SAM" id="MobiDB-lite"/>
    </source>
</evidence>
<evidence type="ECO:0000305" key="4"/>
<sequence length="162" mass="18880">MSYNGIGLQSVRGSATSGHIQKNIANKISKPGHYESRKNQKSLMSKRADEAKQSQNKREAYKQIKSELTKHEQLRRIEVKCMDLQDELEEQGVEPDEIKARVDELRKKLNNKEFDENDAKSPTTTTPQPSRKDKQLKEDLENENKNKDGVFEYKRRYADKRN</sequence>
<comment type="function">
    <text evidence="1">Involved in pre-mRNA splicing. May function at or prior to the first catalytic step of splicing at the catalytic center of the spliceosome. May do so by stabilizing the catalytic center or the position of the RNA substrate (By similarity).</text>
</comment>
<comment type="subunit">
    <text evidence="1">Associates with the NTC complex (or PRP19-associated complex). The NTC complex associates with the spliceosome after the release of the U1 and U4 snRNAs and forms the CWC spliceosome subcomplex reminiscent of a late-stage spliceosome.</text>
</comment>
<comment type="subcellular location">
    <subcellularLocation>
        <location evidence="1">Cytoplasm</location>
    </subcellularLocation>
    <subcellularLocation>
        <location evidence="1">Nucleus</location>
    </subcellularLocation>
</comment>
<comment type="similarity">
    <text evidence="4">Belongs to the CWC21 family.</text>
</comment>
<proteinExistence type="inferred from homology"/>
<accession>Q5AP89</accession>
<accession>A0A1D8PER7</accession>
<dbReference type="EMBL" id="CP017623">
    <property type="protein sequence ID" value="AOW26639.1"/>
    <property type="molecule type" value="Genomic_DNA"/>
</dbReference>
<dbReference type="RefSeq" id="XP_723559.2">
    <property type="nucleotide sequence ID" value="XM_718466.2"/>
</dbReference>
<dbReference type="SMR" id="Q5AP89"/>
<dbReference type="FunCoup" id="Q5AP89">
    <property type="interactions" value="58"/>
</dbReference>
<dbReference type="STRING" id="237561.Q5AP89"/>
<dbReference type="EnsemblFungi" id="C1_10080W_A-T">
    <property type="protein sequence ID" value="C1_10080W_A-T-p1"/>
    <property type="gene ID" value="C1_10080W_A"/>
</dbReference>
<dbReference type="GeneID" id="3634814"/>
<dbReference type="KEGG" id="cal:CAALFM_C110080WA"/>
<dbReference type="CGD" id="CAL0000190345">
    <property type="gene designation" value="orf19.12339"/>
</dbReference>
<dbReference type="VEuPathDB" id="FungiDB:C1_10080W_A"/>
<dbReference type="eggNOG" id="KOG1869">
    <property type="taxonomic scope" value="Eukaryota"/>
</dbReference>
<dbReference type="HOGENOM" id="CLU_067891_3_0_1"/>
<dbReference type="InParanoid" id="Q5AP89"/>
<dbReference type="OrthoDB" id="10267305at2759"/>
<dbReference type="PRO" id="PR:Q5AP89"/>
<dbReference type="Proteomes" id="UP000000559">
    <property type="component" value="Chromosome 1"/>
</dbReference>
<dbReference type="GO" id="GO:0005737">
    <property type="term" value="C:cytoplasm"/>
    <property type="evidence" value="ECO:0007669"/>
    <property type="project" value="UniProtKB-SubCell"/>
</dbReference>
<dbReference type="GO" id="GO:0005681">
    <property type="term" value="C:spliceosomal complex"/>
    <property type="evidence" value="ECO:0007669"/>
    <property type="project" value="UniProtKB-KW"/>
</dbReference>
<dbReference type="GO" id="GO:0006397">
    <property type="term" value="P:mRNA processing"/>
    <property type="evidence" value="ECO:0007669"/>
    <property type="project" value="UniProtKB-KW"/>
</dbReference>
<dbReference type="GO" id="GO:0008380">
    <property type="term" value="P:RNA splicing"/>
    <property type="evidence" value="ECO:0007669"/>
    <property type="project" value="UniProtKB-KW"/>
</dbReference>
<dbReference type="CDD" id="cd21372">
    <property type="entry name" value="cwf21_CWC21-like"/>
    <property type="match status" value="1"/>
</dbReference>
<dbReference type="Gene3D" id="6.10.140.420">
    <property type="match status" value="1"/>
</dbReference>
<dbReference type="InterPro" id="IPR051372">
    <property type="entry name" value="CWC21"/>
</dbReference>
<dbReference type="InterPro" id="IPR013170">
    <property type="entry name" value="mRNA_splic_Cwf21_dom"/>
</dbReference>
<dbReference type="PANTHER" id="PTHR36562">
    <property type="entry name" value="SERINE/ARGININE REPETITIVE MATRIX 2"/>
    <property type="match status" value="1"/>
</dbReference>
<dbReference type="PANTHER" id="PTHR36562:SF5">
    <property type="entry name" value="SERINE_ARGININE REPETITIVE MATRIX 2"/>
    <property type="match status" value="1"/>
</dbReference>
<dbReference type="Pfam" id="PF08312">
    <property type="entry name" value="cwf21"/>
    <property type="match status" value="1"/>
</dbReference>
<dbReference type="SMART" id="SM01115">
    <property type="entry name" value="cwf21"/>
    <property type="match status" value="1"/>
</dbReference>
<feature type="chain" id="PRO_0000123495" description="Pre-mRNA-splicing factor CWC21">
    <location>
        <begin position="1"/>
        <end position="162"/>
    </location>
</feature>
<feature type="domain" description="CWF21" evidence="2">
    <location>
        <begin position="70"/>
        <end position="111"/>
    </location>
</feature>
<feature type="region of interest" description="Disordered" evidence="3">
    <location>
        <begin position="1"/>
        <end position="69"/>
    </location>
</feature>
<feature type="region of interest" description="Disordered" evidence="3">
    <location>
        <begin position="109"/>
        <end position="162"/>
    </location>
</feature>
<feature type="coiled-coil region" evidence="2">
    <location>
        <begin position="48"/>
        <end position="150"/>
    </location>
</feature>
<feature type="compositionally biased region" description="Polar residues" evidence="3">
    <location>
        <begin position="11"/>
        <end position="26"/>
    </location>
</feature>
<feature type="compositionally biased region" description="Basic and acidic residues" evidence="3">
    <location>
        <begin position="46"/>
        <end position="69"/>
    </location>
</feature>
<feature type="compositionally biased region" description="Basic and acidic residues" evidence="3">
    <location>
        <begin position="109"/>
        <end position="119"/>
    </location>
</feature>
<feature type="compositionally biased region" description="Polar residues" evidence="3">
    <location>
        <begin position="120"/>
        <end position="129"/>
    </location>
</feature>
<feature type="compositionally biased region" description="Basic and acidic residues" evidence="3">
    <location>
        <begin position="130"/>
        <end position="162"/>
    </location>
</feature>
<keyword id="KW-0175">Coiled coil</keyword>
<keyword id="KW-0963">Cytoplasm</keyword>
<keyword id="KW-0507">mRNA processing</keyword>
<keyword id="KW-0508">mRNA splicing</keyword>
<keyword id="KW-0539">Nucleus</keyword>
<keyword id="KW-1185">Reference proteome</keyword>
<keyword id="KW-0747">Spliceosome</keyword>